<organism>
    <name type="scientific">Euglena viridis</name>
    <name type="common">Cercaria viridis</name>
    <dbReference type="NCBI Taxonomy" id="3040"/>
    <lineage>
        <taxon>Eukaryota</taxon>
        <taxon>Discoba</taxon>
        <taxon>Euglenozoa</taxon>
        <taxon>Euglenida</taxon>
        <taxon>Spirocuta</taxon>
        <taxon>Euglenophyceae</taxon>
        <taxon>Euglenales</taxon>
        <taxon>Euglenaceae</taxon>
        <taxon>Euglena</taxon>
    </lineage>
</organism>
<accession>P48075</accession>
<protein>
    <recommendedName>
        <fullName evidence="1">Ribulose bisphosphate carboxylase large chain</fullName>
        <shortName evidence="1">RuBisCO large subunit</shortName>
        <ecNumber evidence="1">4.1.1.39</ecNumber>
    </recommendedName>
</protein>
<sequence length="436" mass="48359">YRLTYYTPDYQVAETDILAAFRMTPQPGVPAEECGAAVAAESSTGTWTTVWTDGLTQLDKYKGRCYDLEPVPGESNQYIAYVAYPIDLFEEGSVTNLLTSIVGNVFGFKALRSLRLEDLRIPPAYAKTFWGPPHGIQVERDKLNKYGRPLLGCTIKPKLGLSAKYYGRAVYECLRGGLDFTKDDENVNSQAFMRWRDRFLFCAEAIYKAQSETGEVKGHYLNATGGTVEEMYKRANYAAQIGVPIIMHDYITGGFTANTSLSMFCRDNGLLLHIHRAMHAVIDRQRNHGIHFRVLAKTLRMSGGDHLHSGTVVGKLEGEREVTLGFVDLMRDPYIEKDRSRGIYFTQDWCGMGGVMPVASGGIHVWHMPALTEIFGDDACLQFGGGTLGHPWGNAPGAVANRVASEACVQARNEGRDLSREGGDVIREACKWSPEL</sequence>
<feature type="chain" id="PRO_0000062471" description="Ribulose bisphosphate carboxylase large chain">
    <location>
        <begin position="1" status="less than"/>
        <end position="436" status="greater than"/>
    </location>
</feature>
<feature type="active site" description="Proton acceptor" evidence="1">
    <location>
        <position position="156"/>
    </location>
</feature>
<feature type="active site" description="Proton acceptor" evidence="1">
    <location>
        <position position="275"/>
    </location>
</feature>
<feature type="binding site" description="in homodimeric partner" evidence="1">
    <location>
        <position position="104"/>
    </location>
    <ligand>
        <name>substrate</name>
    </ligand>
</feature>
<feature type="binding site" evidence="1">
    <location>
        <position position="154"/>
    </location>
    <ligand>
        <name>substrate</name>
    </ligand>
</feature>
<feature type="binding site" evidence="1">
    <location>
        <position position="158"/>
    </location>
    <ligand>
        <name>substrate</name>
    </ligand>
</feature>
<feature type="binding site" description="via carbamate group" evidence="1">
    <location>
        <position position="182"/>
    </location>
    <ligand>
        <name>Mg(2+)</name>
        <dbReference type="ChEBI" id="CHEBI:18420"/>
    </ligand>
</feature>
<feature type="binding site" evidence="1">
    <location>
        <position position="184"/>
    </location>
    <ligand>
        <name>Mg(2+)</name>
        <dbReference type="ChEBI" id="CHEBI:18420"/>
    </ligand>
</feature>
<feature type="binding site" evidence="1">
    <location>
        <position position="185"/>
    </location>
    <ligand>
        <name>Mg(2+)</name>
        <dbReference type="ChEBI" id="CHEBI:18420"/>
    </ligand>
</feature>
<feature type="binding site" evidence="1">
    <location>
        <position position="276"/>
    </location>
    <ligand>
        <name>substrate</name>
    </ligand>
</feature>
<feature type="binding site" evidence="1">
    <location>
        <position position="308"/>
    </location>
    <ligand>
        <name>substrate</name>
    </ligand>
</feature>
<feature type="binding site" evidence="1">
    <location>
        <position position="360"/>
    </location>
    <ligand>
        <name>substrate</name>
    </ligand>
</feature>
<feature type="site" description="Transition state stabilizer" evidence="1">
    <location>
        <position position="315"/>
    </location>
</feature>
<feature type="modified residue" description="N6-carboxylysine" evidence="1">
    <location>
        <position position="182"/>
    </location>
</feature>
<feature type="non-terminal residue">
    <location>
        <position position="1"/>
    </location>
</feature>
<feature type="non-terminal residue">
    <location>
        <position position="436"/>
    </location>
</feature>
<keyword id="KW-0113">Calvin cycle</keyword>
<keyword id="KW-0120">Carbon dioxide fixation</keyword>
<keyword id="KW-0150">Chloroplast</keyword>
<keyword id="KW-0456">Lyase</keyword>
<keyword id="KW-0460">Magnesium</keyword>
<keyword id="KW-0479">Metal-binding</keyword>
<keyword id="KW-0503">Monooxygenase</keyword>
<keyword id="KW-0560">Oxidoreductase</keyword>
<keyword id="KW-0601">Photorespiration</keyword>
<keyword id="KW-0602">Photosynthesis</keyword>
<keyword id="KW-0934">Plastid</keyword>
<comment type="function">
    <text evidence="1">RuBisCO catalyzes two reactions: the carboxylation of D-ribulose 1,5-bisphosphate, the primary event in carbon dioxide fixation, as well as the oxidative fragmentation of the pentose substrate in the photorespiration process. Both reactions occur simultaneously and in competition at the same active site.</text>
</comment>
<comment type="catalytic activity">
    <reaction evidence="1">
        <text>2 (2R)-3-phosphoglycerate + 2 H(+) = D-ribulose 1,5-bisphosphate + CO2 + H2O</text>
        <dbReference type="Rhea" id="RHEA:23124"/>
        <dbReference type="ChEBI" id="CHEBI:15377"/>
        <dbReference type="ChEBI" id="CHEBI:15378"/>
        <dbReference type="ChEBI" id="CHEBI:16526"/>
        <dbReference type="ChEBI" id="CHEBI:57870"/>
        <dbReference type="ChEBI" id="CHEBI:58272"/>
        <dbReference type="EC" id="4.1.1.39"/>
    </reaction>
</comment>
<comment type="catalytic activity">
    <reaction evidence="1">
        <text>D-ribulose 1,5-bisphosphate + O2 = 2-phosphoglycolate + (2R)-3-phosphoglycerate + 2 H(+)</text>
        <dbReference type="Rhea" id="RHEA:36631"/>
        <dbReference type="ChEBI" id="CHEBI:15378"/>
        <dbReference type="ChEBI" id="CHEBI:15379"/>
        <dbReference type="ChEBI" id="CHEBI:57870"/>
        <dbReference type="ChEBI" id="CHEBI:58033"/>
        <dbReference type="ChEBI" id="CHEBI:58272"/>
    </reaction>
</comment>
<comment type="cofactor">
    <cofactor evidence="1">
        <name>Mg(2+)</name>
        <dbReference type="ChEBI" id="CHEBI:18420"/>
    </cofactor>
    <text evidence="1">Binds 1 Mg(2+) ion per subunit.</text>
</comment>
<comment type="subunit">
    <text evidence="1">Heterohexadecamer of 8 large chains and 8 small chains.</text>
</comment>
<comment type="subcellular location">
    <subcellularLocation>
        <location>Plastid</location>
        <location>Chloroplast</location>
    </subcellularLocation>
</comment>
<comment type="miscellaneous">
    <text evidence="1">The basic functional RuBisCO is composed of a large chain homodimer in a 'head-to-tail' conformation. In form I RuBisCO this homodimer is arranged in a barrel-like tetramer with the small subunits forming a tetrameric 'cap' on each end of the 'barrel'.</text>
</comment>
<comment type="similarity">
    <text evidence="1">Belongs to the RuBisCO large chain family. Type I subfamily.</text>
</comment>
<geneLocation type="chloroplast"/>
<proteinExistence type="evidence at transcript level"/>
<gene>
    <name evidence="1" type="primary">rbcL</name>
</gene>
<reference key="1">
    <citation type="journal article" date="1995" name="Nucleic Acids Res.">
        <title>Evidence for the late origin of introns in chloroplast genes from an evolutionary analysis of the genus Euglena.</title>
        <authorList>
            <person name="Thompson M.D."/>
            <person name="Copertino D.W."/>
            <person name="Thompson E."/>
            <person name="Favreau M.R."/>
            <person name="Hallick R.B."/>
        </authorList>
    </citation>
    <scope>NUCLEOTIDE SEQUENCE [MRNA]</scope>
    <source>
        <strain>UTEX 85</strain>
    </source>
</reference>
<name>RBL_EUGVI</name>
<dbReference type="EC" id="4.1.1.39" evidence="1"/>
<dbReference type="EMBL" id="U21010">
    <property type="protein sequence ID" value="AAA91983.1"/>
    <property type="molecule type" value="mRNA"/>
</dbReference>
<dbReference type="PIR" id="S66172">
    <property type="entry name" value="S66172"/>
</dbReference>
<dbReference type="SMR" id="P48075"/>
<dbReference type="GO" id="GO:0009507">
    <property type="term" value="C:chloroplast"/>
    <property type="evidence" value="ECO:0007669"/>
    <property type="project" value="UniProtKB-SubCell"/>
</dbReference>
<dbReference type="GO" id="GO:0000287">
    <property type="term" value="F:magnesium ion binding"/>
    <property type="evidence" value="ECO:0007669"/>
    <property type="project" value="InterPro"/>
</dbReference>
<dbReference type="GO" id="GO:0004497">
    <property type="term" value="F:monooxygenase activity"/>
    <property type="evidence" value="ECO:0007669"/>
    <property type="project" value="UniProtKB-KW"/>
</dbReference>
<dbReference type="GO" id="GO:0016984">
    <property type="term" value="F:ribulose-bisphosphate carboxylase activity"/>
    <property type="evidence" value="ECO:0007669"/>
    <property type="project" value="UniProtKB-EC"/>
</dbReference>
<dbReference type="GO" id="GO:0009853">
    <property type="term" value="P:photorespiration"/>
    <property type="evidence" value="ECO:0007669"/>
    <property type="project" value="UniProtKB-KW"/>
</dbReference>
<dbReference type="GO" id="GO:0019253">
    <property type="term" value="P:reductive pentose-phosphate cycle"/>
    <property type="evidence" value="ECO:0007669"/>
    <property type="project" value="UniProtKB-KW"/>
</dbReference>
<dbReference type="CDD" id="cd08212">
    <property type="entry name" value="RuBisCO_large_I"/>
    <property type="match status" value="1"/>
</dbReference>
<dbReference type="Gene3D" id="3.20.20.110">
    <property type="entry name" value="Ribulose bisphosphate carboxylase, large subunit, C-terminal domain"/>
    <property type="match status" value="1"/>
</dbReference>
<dbReference type="Gene3D" id="3.30.70.150">
    <property type="entry name" value="RuBisCO large subunit, N-terminal domain"/>
    <property type="match status" value="1"/>
</dbReference>
<dbReference type="HAMAP" id="MF_01338">
    <property type="entry name" value="RuBisCO_L_type1"/>
    <property type="match status" value="1"/>
</dbReference>
<dbReference type="InterPro" id="IPR033966">
    <property type="entry name" value="RuBisCO"/>
</dbReference>
<dbReference type="InterPro" id="IPR020878">
    <property type="entry name" value="RuBisCo_large_chain_AS"/>
</dbReference>
<dbReference type="InterPro" id="IPR000685">
    <property type="entry name" value="RuBisCO_lsu_C"/>
</dbReference>
<dbReference type="InterPro" id="IPR036376">
    <property type="entry name" value="RuBisCO_lsu_C_sf"/>
</dbReference>
<dbReference type="InterPro" id="IPR017443">
    <property type="entry name" value="RuBisCO_lsu_fd_N"/>
</dbReference>
<dbReference type="InterPro" id="IPR036422">
    <property type="entry name" value="RuBisCO_lsu_N_sf"/>
</dbReference>
<dbReference type="InterPro" id="IPR020888">
    <property type="entry name" value="RuBisCO_lsuI"/>
</dbReference>
<dbReference type="NCBIfam" id="NF003252">
    <property type="entry name" value="PRK04208.1"/>
    <property type="match status" value="1"/>
</dbReference>
<dbReference type="PANTHER" id="PTHR42704">
    <property type="entry name" value="RIBULOSE BISPHOSPHATE CARBOXYLASE"/>
    <property type="match status" value="1"/>
</dbReference>
<dbReference type="PANTHER" id="PTHR42704:SF17">
    <property type="entry name" value="RIBULOSE BISPHOSPHATE CARBOXYLASE LARGE CHAIN"/>
    <property type="match status" value="1"/>
</dbReference>
<dbReference type="Pfam" id="PF00016">
    <property type="entry name" value="RuBisCO_large"/>
    <property type="match status" value="1"/>
</dbReference>
<dbReference type="Pfam" id="PF02788">
    <property type="entry name" value="RuBisCO_large_N"/>
    <property type="match status" value="1"/>
</dbReference>
<dbReference type="SFLD" id="SFLDG01052">
    <property type="entry name" value="RuBisCO"/>
    <property type="match status" value="1"/>
</dbReference>
<dbReference type="SFLD" id="SFLDS00014">
    <property type="entry name" value="RuBisCO"/>
    <property type="match status" value="1"/>
</dbReference>
<dbReference type="SFLD" id="SFLDG00301">
    <property type="entry name" value="RuBisCO-like_proteins"/>
    <property type="match status" value="1"/>
</dbReference>
<dbReference type="SUPFAM" id="SSF51649">
    <property type="entry name" value="RuBisCo, C-terminal domain"/>
    <property type="match status" value="1"/>
</dbReference>
<dbReference type="SUPFAM" id="SSF54966">
    <property type="entry name" value="RuBisCO, large subunit, small (N-terminal) domain"/>
    <property type="match status" value="1"/>
</dbReference>
<dbReference type="PROSITE" id="PS00157">
    <property type="entry name" value="RUBISCO_LARGE"/>
    <property type="match status" value="1"/>
</dbReference>
<evidence type="ECO:0000255" key="1">
    <source>
        <dbReference type="HAMAP-Rule" id="MF_01338"/>
    </source>
</evidence>